<keyword id="KW-0488">Methylation</keyword>
<keyword id="KW-0687">Ribonucleoprotein</keyword>
<keyword id="KW-0689">Ribosomal protein</keyword>
<keyword id="KW-0694">RNA-binding</keyword>
<keyword id="KW-0699">rRNA-binding</keyword>
<name>RL11_BARQU</name>
<sequence>MAKKSIGQLKLQVPAGAATPSPPIGPALGQRGINIMEFCKAFNAATQEMEKGAPIPVIITYYQDKSFTFSLKTPPVSFFLKKEVNLKSGSKEPGKVSVGRISRDKIRSIAEAKMKDLNANDIEAAMRMVEGSARSMGLEVVG</sequence>
<feature type="chain" id="PRO_0000104248" description="Large ribosomal subunit protein uL11">
    <location>
        <begin position="1"/>
        <end position="142"/>
    </location>
</feature>
<reference key="1">
    <citation type="journal article" date="2004" name="Proc. Natl. Acad. Sci. U.S.A.">
        <title>The louse-borne human pathogen Bartonella quintana is a genomic derivative of the zoonotic agent Bartonella henselae.</title>
        <authorList>
            <person name="Alsmark U.C.M."/>
            <person name="Frank A.C."/>
            <person name="Karlberg E.O."/>
            <person name="Legault B.-A."/>
            <person name="Ardell D.H."/>
            <person name="Canbaeck B."/>
            <person name="Eriksson A.-S."/>
            <person name="Naeslund A.K."/>
            <person name="Handley S.A."/>
            <person name="Huvet M."/>
            <person name="La Scola B."/>
            <person name="Holmberg M."/>
            <person name="Andersson S.G.E."/>
        </authorList>
    </citation>
    <scope>NUCLEOTIDE SEQUENCE [LARGE SCALE GENOMIC DNA]</scope>
    <source>
        <strain>Toulouse</strain>
    </source>
</reference>
<evidence type="ECO:0000255" key="1">
    <source>
        <dbReference type="HAMAP-Rule" id="MF_00736"/>
    </source>
</evidence>
<evidence type="ECO:0000305" key="2"/>
<gene>
    <name evidence="1" type="primary">rplK</name>
    <name type="ordered locus">BQ07170</name>
</gene>
<dbReference type="EMBL" id="BX897700">
    <property type="protein sequence ID" value="CAF26206.1"/>
    <property type="molecule type" value="Genomic_DNA"/>
</dbReference>
<dbReference type="RefSeq" id="WP_011179460.1">
    <property type="nucleotide sequence ID" value="NC_005955.1"/>
</dbReference>
<dbReference type="SMR" id="Q6FZL5"/>
<dbReference type="GeneID" id="56532927"/>
<dbReference type="KEGG" id="bqu:BQ07170"/>
<dbReference type="eggNOG" id="COG0080">
    <property type="taxonomic scope" value="Bacteria"/>
</dbReference>
<dbReference type="HOGENOM" id="CLU_074237_2_0_5"/>
<dbReference type="OrthoDB" id="9802408at2"/>
<dbReference type="Proteomes" id="UP000000597">
    <property type="component" value="Chromosome"/>
</dbReference>
<dbReference type="GO" id="GO:0022625">
    <property type="term" value="C:cytosolic large ribosomal subunit"/>
    <property type="evidence" value="ECO:0007669"/>
    <property type="project" value="TreeGrafter"/>
</dbReference>
<dbReference type="GO" id="GO:0070180">
    <property type="term" value="F:large ribosomal subunit rRNA binding"/>
    <property type="evidence" value="ECO:0007669"/>
    <property type="project" value="UniProtKB-UniRule"/>
</dbReference>
<dbReference type="GO" id="GO:0003735">
    <property type="term" value="F:structural constituent of ribosome"/>
    <property type="evidence" value="ECO:0007669"/>
    <property type="project" value="InterPro"/>
</dbReference>
<dbReference type="GO" id="GO:0006412">
    <property type="term" value="P:translation"/>
    <property type="evidence" value="ECO:0007669"/>
    <property type="project" value="UniProtKB-UniRule"/>
</dbReference>
<dbReference type="CDD" id="cd00349">
    <property type="entry name" value="Ribosomal_L11"/>
    <property type="match status" value="1"/>
</dbReference>
<dbReference type="FunFam" id="1.10.10.250:FF:000001">
    <property type="entry name" value="50S ribosomal protein L11"/>
    <property type="match status" value="1"/>
</dbReference>
<dbReference type="FunFam" id="3.30.1550.10:FF:000001">
    <property type="entry name" value="50S ribosomal protein L11"/>
    <property type="match status" value="1"/>
</dbReference>
<dbReference type="Gene3D" id="1.10.10.250">
    <property type="entry name" value="Ribosomal protein L11, C-terminal domain"/>
    <property type="match status" value="1"/>
</dbReference>
<dbReference type="Gene3D" id="3.30.1550.10">
    <property type="entry name" value="Ribosomal protein L11/L12, N-terminal domain"/>
    <property type="match status" value="1"/>
</dbReference>
<dbReference type="HAMAP" id="MF_00736">
    <property type="entry name" value="Ribosomal_uL11"/>
    <property type="match status" value="1"/>
</dbReference>
<dbReference type="InterPro" id="IPR000911">
    <property type="entry name" value="Ribosomal_uL11"/>
</dbReference>
<dbReference type="InterPro" id="IPR006519">
    <property type="entry name" value="Ribosomal_uL11_bac-typ"/>
</dbReference>
<dbReference type="InterPro" id="IPR020783">
    <property type="entry name" value="Ribosomal_uL11_C"/>
</dbReference>
<dbReference type="InterPro" id="IPR036769">
    <property type="entry name" value="Ribosomal_uL11_C_sf"/>
</dbReference>
<dbReference type="InterPro" id="IPR020785">
    <property type="entry name" value="Ribosomal_uL11_CS"/>
</dbReference>
<dbReference type="InterPro" id="IPR020784">
    <property type="entry name" value="Ribosomal_uL11_N"/>
</dbReference>
<dbReference type="InterPro" id="IPR036796">
    <property type="entry name" value="Ribosomal_uL11_N_sf"/>
</dbReference>
<dbReference type="NCBIfam" id="TIGR01632">
    <property type="entry name" value="L11_bact"/>
    <property type="match status" value="1"/>
</dbReference>
<dbReference type="PANTHER" id="PTHR11661">
    <property type="entry name" value="60S RIBOSOMAL PROTEIN L12"/>
    <property type="match status" value="1"/>
</dbReference>
<dbReference type="PANTHER" id="PTHR11661:SF1">
    <property type="entry name" value="LARGE RIBOSOMAL SUBUNIT PROTEIN UL11M"/>
    <property type="match status" value="1"/>
</dbReference>
<dbReference type="Pfam" id="PF00298">
    <property type="entry name" value="Ribosomal_L11"/>
    <property type="match status" value="1"/>
</dbReference>
<dbReference type="Pfam" id="PF03946">
    <property type="entry name" value="Ribosomal_L11_N"/>
    <property type="match status" value="1"/>
</dbReference>
<dbReference type="SMART" id="SM00649">
    <property type="entry name" value="RL11"/>
    <property type="match status" value="1"/>
</dbReference>
<dbReference type="SUPFAM" id="SSF54747">
    <property type="entry name" value="Ribosomal L11/L12e N-terminal domain"/>
    <property type="match status" value="1"/>
</dbReference>
<dbReference type="SUPFAM" id="SSF46906">
    <property type="entry name" value="Ribosomal protein L11, C-terminal domain"/>
    <property type="match status" value="1"/>
</dbReference>
<dbReference type="PROSITE" id="PS00359">
    <property type="entry name" value="RIBOSOMAL_L11"/>
    <property type="match status" value="1"/>
</dbReference>
<proteinExistence type="inferred from homology"/>
<accession>Q6FZL5</accession>
<organism>
    <name type="scientific">Bartonella quintana (strain Toulouse)</name>
    <name type="common">Rochalimaea quintana</name>
    <dbReference type="NCBI Taxonomy" id="283165"/>
    <lineage>
        <taxon>Bacteria</taxon>
        <taxon>Pseudomonadati</taxon>
        <taxon>Pseudomonadota</taxon>
        <taxon>Alphaproteobacteria</taxon>
        <taxon>Hyphomicrobiales</taxon>
        <taxon>Bartonellaceae</taxon>
        <taxon>Bartonella</taxon>
    </lineage>
</organism>
<comment type="function">
    <text evidence="1">Forms part of the ribosomal stalk which helps the ribosome interact with GTP-bound translation factors.</text>
</comment>
<comment type="subunit">
    <text evidence="1">Part of the ribosomal stalk of the 50S ribosomal subunit. Interacts with L10 and the large rRNA to form the base of the stalk. L10 forms an elongated spine to which L12 dimers bind in a sequential fashion forming a multimeric L10(L12)X complex.</text>
</comment>
<comment type="PTM">
    <text evidence="1">One or more lysine residues are methylated.</text>
</comment>
<comment type="similarity">
    <text evidence="1">Belongs to the universal ribosomal protein uL11 family.</text>
</comment>
<protein>
    <recommendedName>
        <fullName evidence="1">Large ribosomal subunit protein uL11</fullName>
    </recommendedName>
    <alternativeName>
        <fullName evidence="2">50S ribosomal protein L11</fullName>
    </alternativeName>
</protein>